<sequence>MLILKSFVYTVVASFVSLFIFGFLSNDPGRRPGRKRI</sequence>
<comment type="function">
    <text evidence="1">One of the components of the core complex of photosystem II (PSII), required for its stability and/or assembly. PSII is a light-driven water:plastoquinone oxidoreductase that uses light energy to abstract electrons from H(2)O, generating O(2) and a proton gradient subsequently used for ATP formation. It consists of a core antenna complex that captures photons, and an electron transfer chain that converts photonic excitation into a charge separation.</text>
</comment>
<comment type="subunit">
    <text evidence="2">PSII is composed of 1 copy each of membrane proteins PsbA, PsbB, PsbC, PsbD, PsbE, PsbF, PsbH, PsbI, PsbJ, PsbK, PsbL, PsbM, PsbT, PsbY, PsbZ, Psb30/Ycf12, at least 3 peripheral proteins of the oxygen-evolving complex and a large number of cofactors. It forms dimeric complexes.</text>
</comment>
<comment type="subcellular location">
    <subcellularLocation>
        <location evidence="1">Plastid</location>
        <location evidence="1">Chloroplast thylakoid membrane</location>
        <topology evidence="1">Single-pass membrane protein</topology>
    </subcellularLocation>
</comment>
<comment type="similarity">
    <text evidence="1">Belongs to the PsbI family.</text>
</comment>
<reference key="1">
    <citation type="journal article" date="2007" name="Mol. Biol. Evol.">
        <title>The complete chloroplast genome of the chlorarachniophyte Bigelowiella natans: evidence for independent origins of chlorarachniophyte and euglenid secondary endosymbionts.</title>
        <authorList>
            <person name="Rogers M.B."/>
            <person name="Gilson P.R."/>
            <person name="Su V."/>
            <person name="McFadden G.I."/>
            <person name="Keeling P.J."/>
        </authorList>
    </citation>
    <scope>NUCLEOTIDE SEQUENCE [LARGE SCALE GENOMIC DNA]</scope>
</reference>
<organism>
    <name type="scientific">Bigelowiella natans</name>
    <name type="common">Pedinomonas minutissima</name>
    <name type="synonym">Chlorarachnion sp. (strain CCMP621)</name>
    <dbReference type="NCBI Taxonomy" id="227086"/>
    <lineage>
        <taxon>Eukaryota</taxon>
        <taxon>Sar</taxon>
        <taxon>Rhizaria</taxon>
        <taxon>Cercozoa</taxon>
        <taxon>Chlorarachniophyceae</taxon>
        <taxon>Bigelowiella</taxon>
    </lineage>
</organism>
<geneLocation type="chloroplast"/>
<accession>Q06J30</accession>
<gene>
    <name evidence="1" type="primary">psbI</name>
</gene>
<evidence type="ECO:0000255" key="1">
    <source>
        <dbReference type="HAMAP-Rule" id="MF_01316"/>
    </source>
</evidence>
<evidence type="ECO:0000305" key="2"/>
<keyword id="KW-0150">Chloroplast</keyword>
<keyword id="KW-0472">Membrane</keyword>
<keyword id="KW-0602">Photosynthesis</keyword>
<keyword id="KW-0604">Photosystem II</keyword>
<keyword id="KW-0934">Plastid</keyword>
<keyword id="KW-0674">Reaction center</keyword>
<keyword id="KW-0793">Thylakoid</keyword>
<keyword id="KW-0812">Transmembrane</keyword>
<keyword id="KW-1133">Transmembrane helix</keyword>
<feature type="chain" id="PRO_0000296330" description="Photosystem II reaction center protein I">
    <location>
        <begin position="1"/>
        <end position="37"/>
    </location>
</feature>
<feature type="transmembrane region" description="Helical" evidence="1">
    <location>
        <begin position="1"/>
        <end position="21"/>
    </location>
</feature>
<protein>
    <recommendedName>
        <fullName evidence="1">Photosystem II reaction center protein I</fullName>
        <shortName evidence="1">PSII-I</shortName>
    </recommendedName>
    <alternativeName>
        <fullName evidence="1">PSII 4.8 kDa protein</fullName>
    </alternativeName>
</protein>
<dbReference type="EMBL" id="DQ851108">
    <property type="protein sequence ID" value="ABG91429.1"/>
    <property type="molecule type" value="Genomic_DNA"/>
</dbReference>
<dbReference type="RefSeq" id="YP_778597.1">
    <property type="nucleotide sequence ID" value="NC_008408.1"/>
</dbReference>
<dbReference type="SMR" id="Q06J30"/>
<dbReference type="GeneID" id="4353014"/>
<dbReference type="GO" id="GO:0009535">
    <property type="term" value="C:chloroplast thylakoid membrane"/>
    <property type="evidence" value="ECO:0007669"/>
    <property type="project" value="UniProtKB-SubCell"/>
</dbReference>
<dbReference type="GO" id="GO:0009539">
    <property type="term" value="C:photosystem II reaction center"/>
    <property type="evidence" value="ECO:0007669"/>
    <property type="project" value="InterPro"/>
</dbReference>
<dbReference type="GO" id="GO:0015979">
    <property type="term" value="P:photosynthesis"/>
    <property type="evidence" value="ECO:0007669"/>
    <property type="project" value="UniProtKB-UniRule"/>
</dbReference>
<dbReference type="HAMAP" id="MF_01316">
    <property type="entry name" value="PSII_PsbI"/>
    <property type="match status" value="1"/>
</dbReference>
<dbReference type="InterPro" id="IPR003686">
    <property type="entry name" value="PSII_PsbI"/>
</dbReference>
<dbReference type="InterPro" id="IPR037271">
    <property type="entry name" value="PSII_PsbI_sf"/>
</dbReference>
<dbReference type="PANTHER" id="PTHR35772">
    <property type="entry name" value="PHOTOSYSTEM II REACTION CENTER PROTEIN I"/>
    <property type="match status" value="1"/>
</dbReference>
<dbReference type="PANTHER" id="PTHR35772:SF1">
    <property type="entry name" value="PHOTOSYSTEM II REACTION CENTER PROTEIN I"/>
    <property type="match status" value="1"/>
</dbReference>
<dbReference type="Pfam" id="PF02532">
    <property type="entry name" value="PsbI"/>
    <property type="match status" value="1"/>
</dbReference>
<dbReference type="SUPFAM" id="SSF161041">
    <property type="entry name" value="Photosystem II reaction center protein I, PsbI"/>
    <property type="match status" value="1"/>
</dbReference>
<name>PSBI_BIGNA</name>
<proteinExistence type="inferred from homology"/>